<reference key="1">
    <citation type="submission" date="2002-08" db="EMBL/GenBank/DDBJ databases">
        <title>Cold-adapted chaperonins, Cpn60 and Cpn10 from the hydrocarbonoclastic psychrophile, Oleispira antarctica RB8, and their ability to interact with a non-native 102 kDa carboxylesterase.</title>
        <authorList>
            <person name="Ferrer M."/>
            <person name="Lunsdorf H."/>
            <person name="Chernikova T.N."/>
            <person name="Yakimov M.M."/>
            <person name="Golyshin P.N."/>
            <person name="Timmis K.N."/>
        </authorList>
    </citation>
    <scope>NUCLEOTIDE SEQUENCE [GENOMIC DNA]</scope>
    <source>
        <strain>DSM 14852 / LMG 21398 / RB-8</strain>
    </source>
</reference>
<name>CH60_OLEAN</name>
<evidence type="ECO:0000255" key="1">
    <source>
        <dbReference type="HAMAP-Rule" id="MF_00600"/>
    </source>
</evidence>
<proteinExistence type="inferred from homology"/>
<keyword id="KW-0067">ATP-binding</keyword>
<keyword id="KW-0143">Chaperone</keyword>
<keyword id="KW-0963">Cytoplasm</keyword>
<keyword id="KW-0413">Isomerase</keyword>
<keyword id="KW-0547">Nucleotide-binding</keyword>
<sequence>MAAKDVLFGDSARAKMLVGVNILADAVRVTLGPKGRNVVIEKSFGAPIITKDGVSVAREIELKDKFENMGAQMVKEVASQANDQAGDGTTTATVLAQAIISEGLKSVAAGMNPMDLKRGIDKATAAVVAAIKEQAQPCLDTKAIAQVGTISANADETVGRLIAEAMEKVGKEGVITVEEGKGLEDELDVVEGMQFDRGYLSPYFINNQEKMTVEMENPLILLVDKKIDNLQELLPILENVAKSGRPLLIVAEDVEGQALATLVVNNLRGTFKVAAVKAPGFGDRRKAMLQDLAILTGGQVISEELGMSLETADPSSLGTASKVVIDKENTVIVDGAGTEASVNTRVDQIRAEIESSTSDYDIEKLQERVAKLAGGVAVIKVGAGSEMEMKEKKDRVDDALHATRAAVEEGVVAGGGVALIRALSSVTVVGDNEDQNVGIALALRAMEAPIRQIAGNAGAEGSVVVDKVKSGTGSFGFNASTGEYGDMIAMGILDPAKVTRSSLQAAASIAGLMITTEAMVADAPVEEGAGGMPDMGGMGGMGGMPGMM</sequence>
<protein>
    <recommendedName>
        <fullName evidence="1">Chaperonin GroEL</fullName>
        <ecNumber evidence="1">5.6.1.7</ecNumber>
    </recommendedName>
    <alternativeName>
        <fullName evidence="1">60 kDa chaperonin</fullName>
    </alternativeName>
    <alternativeName>
        <fullName evidence="1">Chaperonin-60</fullName>
        <shortName evidence="1">Cpn60</shortName>
    </alternativeName>
</protein>
<organism>
    <name type="scientific">Oleispira antarctica</name>
    <dbReference type="NCBI Taxonomy" id="188908"/>
    <lineage>
        <taxon>Bacteria</taxon>
        <taxon>Pseudomonadati</taxon>
        <taxon>Pseudomonadota</taxon>
        <taxon>Gammaproteobacteria</taxon>
        <taxon>Oceanospirillales</taxon>
        <taxon>Oceanospirillaceae</taxon>
        <taxon>Oleispira</taxon>
    </lineage>
</organism>
<accession>Q8KM30</accession>
<comment type="function">
    <text evidence="1">Together with its co-chaperonin GroES, plays an essential role in assisting protein folding. The GroEL-GroES system forms a nano-cage that allows encapsulation of the non-native substrate proteins and provides a physical environment optimized to promote and accelerate protein folding.</text>
</comment>
<comment type="catalytic activity">
    <reaction evidence="1">
        <text>ATP + H2O + a folded polypeptide = ADP + phosphate + an unfolded polypeptide.</text>
        <dbReference type="EC" id="5.6.1.7"/>
    </reaction>
</comment>
<comment type="subunit">
    <text evidence="1">Forms a cylinder of 14 subunits composed of two heptameric rings stacked back-to-back. Interacts with the co-chaperonin GroES.</text>
</comment>
<comment type="subcellular location">
    <subcellularLocation>
        <location evidence="1">Cytoplasm</location>
    </subcellularLocation>
</comment>
<comment type="similarity">
    <text evidence="1">Belongs to the chaperonin (HSP60) family.</text>
</comment>
<dbReference type="EC" id="5.6.1.7" evidence="1"/>
<dbReference type="EMBL" id="AJ505131">
    <property type="protein sequence ID" value="CAD43724.1"/>
    <property type="molecule type" value="Genomic_DNA"/>
</dbReference>
<dbReference type="SMR" id="Q8KM30"/>
<dbReference type="GO" id="GO:0005737">
    <property type="term" value="C:cytoplasm"/>
    <property type="evidence" value="ECO:0007669"/>
    <property type="project" value="UniProtKB-SubCell"/>
</dbReference>
<dbReference type="GO" id="GO:0005524">
    <property type="term" value="F:ATP binding"/>
    <property type="evidence" value="ECO:0007669"/>
    <property type="project" value="UniProtKB-UniRule"/>
</dbReference>
<dbReference type="GO" id="GO:0140662">
    <property type="term" value="F:ATP-dependent protein folding chaperone"/>
    <property type="evidence" value="ECO:0007669"/>
    <property type="project" value="InterPro"/>
</dbReference>
<dbReference type="GO" id="GO:0016853">
    <property type="term" value="F:isomerase activity"/>
    <property type="evidence" value="ECO:0007669"/>
    <property type="project" value="UniProtKB-KW"/>
</dbReference>
<dbReference type="GO" id="GO:0051082">
    <property type="term" value="F:unfolded protein binding"/>
    <property type="evidence" value="ECO:0007669"/>
    <property type="project" value="UniProtKB-UniRule"/>
</dbReference>
<dbReference type="GO" id="GO:0042026">
    <property type="term" value="P:protein refolding"/>
    <property type="evidence" value="ECO:0007669"/>
    <property type="project" value="UniProtKB-UniRule"/>
</dbReference>
<dbReference type="CDD" id="cd03344">
    <property type="entry name" value="GroEL"/>
    <property type="match status" value="1"/>
</dbReference>
<dbReference type="FunFam" id="1.10.560.10:FF:000001">
    <property type="entry name" value="60 kDa chaperonin"/>
    <property type="match status" value="1"/>
</dbReference>
<dbReference type="FunFam" id="3.50.7.10:FF:000001">
    <property type="entry name" value="60 kDa chaperonin"/>
    <property type="match status" value="1"/>
</dbReference>
<dbReference type="Gene3D" id="3.50.7.10">
    <property type="entry name" value="GroEL"/>
    <property type="match status" value="1"/>
</dbReference>
<dbReference type="Gene3D" id="1.10.560.10">
    <property type="entry name" value="GroEL-like equatorial domain"/>
    <property type="match status" value="1"/>
</dbReference>
<dbReference type="Gene3D" id="3.30.260.10">
    <property type="entry name" value="TCP-1-like chaperonin intermediate domain"/>
    <property type="match status" value="1"/>
</dbReference>
<dbReference type="HAMAP" id="MF_00600">
    <property type="entry name" value="CH60"/>
    <property type="match status" value="1"/>
</dbReference>
<dbReference type="InterPro" id="IPR018370">
    <property type="entry name" value="Chaperonin_Cpn60_CS"/>
</dbReference>
<dbReference type="InterPro" id="IPR001844">
    <property type="entry name" value="Cpn60/GroEL"/>
</dbReference>
<dbReference type="InterPro" id="IPR002423">
    <property type="entry name" value="Cpn60/GroEL/TCP-1"/>
</dbReference>
<dbReference type="InterPro" id="IPR027409">
    <property type="entry name" value="GroEL-like_apical_dom_sf"/>
</dbReference>
<dbReference type="InterPro" id="IPR027413">
    <property type="entry name" value="GROEL-like_equatorial_sf"/>
</dbReference>
<dbReference type="InterPro" id="IPR027410">
    <property type="entry name" value="TCP-1-like_intermed_sf"/>
</dbReference>
<dbReference type="NCBIfam" id="TIGR02348">
    <property type="entry name" value="GroEL"/>
    <property type="match status" value="1"/>
</dbReference>
<dbReference type="NCBIfam" id="NF000592">
    <property type="entry name" value="PRK00013.1"/>
    <property type="match status" value="1"/>
</dbReference>
<dbReference type="NCBIfam" id="NF009487">
    <property type="entry name" value="PRK12849.1"/>
    <property type="match status" value="1"/>
</dbReference>
<dbReference type="NCBIfam" id="NF009488">
    <property type="entry name" value="PRK12850.1"/>
    <property type="match status" value="1"/>
</dbReference>
<dbReference type="NCBIfam" id="NF009489">
    <property type="entry name" value="PRK12851.1"/>
    <property type="match status" value="1"/>
</dbReference>
<dbReference type="PANTHER" id="PTHR45633">
    <property type="entry name" value="60 KDA HEAT SHOCK PROTEIN, MITOCHONDRIAL"/>
    <property type="match status" value="1"/>
</dbReference>
<dbReference type="Pfam" id="PF00118">
    <property type="entry name" value="Cpn60_TCP1"/>
    <property type="match status" value="1"/>
</dbReference>
<dbReference type="PRINTS" id="PR00298">
    <property type="entry name" value="CHAPERONIN60"/>
</dbReference>
<dbReference type="SUPFAM" id="SSF52029">
    <property type="entry name" value="GroEL apical domain-like"/>
    <property type="match status" value="1"/>
</dbReference>
<dbReference type="SUPFAM" id="SSF48592">
    <property type="entry name" value="GroEL equatorial domain-like"/>
    <property type="match status" value="1"/>
</dbReference>
<dbReference type="SUPFAM" id="SSF54849">
    <property type="entry name" value="GroEL-intermediate domain like"/>
    <property type="match status" value="1"/>
</dbReference>
<dbReference type="PROSITE" id="PS00296">
    <property type="entry name" value="CHAPERONINS_CPN60"/>
    <property type="match status" value="1"/>
</dbReference>
<feature type="chain" id="PRO_0000063466" description="Chaperonin GroEL">
    <location>
        <begin position="1"/>
        <end position="548"/>
    </location>
</feature>
<feature type="binding site" evidence="1">
    <location>
        <begin position="30"/>
        <end position="33"/>
    </location>
    <ligand>
        <name>ATP</name>
        <dbReference type="ChEBI" id="CHEBI:30616"/>
    </ligand>
</feature>
<feature type="binding site" evidence="1">
    <location>
        <position position="51"/>
    </location>
    <ligand>
        <name>ATP</name>
        <dbReference type="ChEBI" id="CHEBI:30616"/>
    </ligand>
</feature>
<feature type="binding site" evidence="1">
    <location>
        <begin position="87"/>
        <end position="91"/>
    </location>
    <ligand>
        <name>ATP</name>
        <dbReference type="ChEBI" id="CHEBI:30616"/>
    </ligand>
</feature>
<feature type="binding site" evidence="1">
    <location>
        <position position="415"/>
    </location>
    <ligand>
        <name>ATP</name>
        <dbReference type="ChEBI" id="CHEBI:30616"/>
    </ligand>
</feature>
<feature type="binding site" evidence="1">
    <location>
        <position position="494"/>
    </location>
    <ligand>
        <name>ATP</name>
        <dbReference type="ChEBI" id="CHEBI:30616"/>
    </ligand>
</feature>
<gene>
    <name evidence="1" type="primary">groEL</name>
    <name type="synonym">cpn60</name>
    <name evidence="1" type="synonym">groL</name>
</gene>